<evidence type="ECO:0000255" key="1">
    <source>
        <dbReference type="HAMAP-Rule" id="MF_01070"/>
    </source>
</evidence>
<name>OPGB_SALNS</name>
<keyword id="KW-0997">Cell inner membrane</keyword>
<keyword id="KW-1003">Cell membrane</keyword>
<keyword id="KW-0472">Membrane</keyword>
<keyword id="KW-0808">Transferase</keyword>
<keyword id="KW-0812">Transmembrane</keyword>
<keyword id="KW-1133">Transmembrane helix</keyword>
<comment type="function">
    <text evidence="1">Transfers a phosphoglycerol residue from phosphatidylglycerol to the membrane-bound nascent glucan backbones.</text>
</comment>
<comment type="catalytic activity">
    <reaction evidence="1">
        <text>a phosphatidylglycerol + a membrane-derived-oligosaccharide D-glucose = a 1,2-diacyl-sn-glycerol + a membrane-derived-oligosaccharide 6-(glycerophospho)-D-glucose.</text>
        <dbReference type="EC" id="2.7.8.20"/>
    </reaction>
</comment>
<comment type="pathway">
    <text evidence="1">Glycan metabolism; osmoregulated periplasmic glucan (OPG) biosynthesis.</text>
</comment>
<comment type="subcellular location">
    <subcellularLocation>
        <location evidence="1">Cell inner membrane</location>
        <topology evidence="1">Multi-pass membrane protein</topology>
    </subcellularLocation>
</comment>
<comment type="similarity">
    <text evidence="1">Belongs to the OpgB family.</text>
</comment>
<gene>
    <name evidence="1" type="primary">mdoB</name>
    <name evidence="1" type="synonym">opgB</name>
    <name type="ordered locus">SNSL254_A4896</name>
</gene>
<sequence>MSELLSVALFLASVLIYAWKAGRNTWWFAATLTVLGLFVILNITLYASDYFTGDGINDAVLYTLTNSLTGAGVGKYILPGIGIALALVAVFGALGWILRRRRHHPHHVGYSLLALLLALGSVDASPAFRQITELVKSQMRDGDPDFAVYYKEPAKTIPNPKLNLVYIYGESLERTYFDNDAFPNLTPELGALKNEGLDFSHTMQLPGTDYTIAGMVASQCGIPLFAPFEGNASASVSSFFPQNICLGDILKNSGYQNYFVQGANLRFAGKDVFLKSHGFDHLYGAEELKTVVADPSYRNDWGFYDDTVLDEAWKKFEALSRSGQRFSLFTLTVDTHHPDGFISRTCNRKRYDYDGKPNQSFSAVSCSQENIAEFINKIKASPWFKDTVIVVSSDHLAMNNTAWKYLNKQDRNNLFFILRGDKPQQETLAVKRNTMDNGATVLDILGGDNFIGLGRSSLSGQSLSEVFLNVKEKVLAMKPDIIRLWNFPKEIKAFTIDRDKNTIAFSGSHFRLPLLLRVSDKRVEPLPESEYSAPLRFQLADFAPRDNFVWIDRCYKMAQLWAPALALSTDWCVSQGQLGGQQTVQHVDKAQWQGKTAFKDTMIDMERYKGNVDTLKIVDNDIRYKADSFIFNVAGAPEEVKQFSGISRPESWGRWSNAQLGDEVKIEYKAPLPKKFDLVITAKAFGDNANRPIPVRVGNEEQTLVLGHDVSTITLHFNNPTDANTLVIAPPAPVSTNEGNILGHSPRKLGIGMVEIKVVNVEG</sequence>
<organism>
    <name type="scientific">Salmonella newport (strain SL254)</name>
    <dbReference type="NCBI Taxonomy" id="423368"/>
    <lineage>
        <taxon>Bacteria</taxon>
        <taxon>Pseudomonadati</taxon>
        <taxon>Pseudomonadota</taxon>
        <taxon>Gammaproteobacteria</taxon>
        <taxon>Enterobacterales</taxon>
        <taxon>Enterobacteriaceae</taxon>
        <taxon>Salmonella</taxon>
    </lineage>
</organism>
<accession>B4T4E6</accession>
<protein>
    <recommendedName>
        <fullName evidence="1">Phosphoglycerol transferase I</fullName>
        <ecNumber evidence="1">2.7.8.20</ecNumber>
    </recommendedName>
    <alternativeName>
        <fullName evidence="1">Phosphatidylglycerol--membrane-oligosaccharide glycerophosphotransferase</fullName>
    </alternativeName>
</protein>
<reference key="1">
    <citation type="journal article" date="2011" name="J. Bacteriol.">
        <title>Comparative genomics of 28 Salmonella enterica isolates: evidence for CRISPR-mediated adaptive sublineage evolution.</title>
        <authorList>
            <person name="Fricke W.F."/>
            <person name="Mammel M.K."/>
            <person name="McDermott P.F."/>
            <person name="Tartera C."/>
            <person name="White D.G."/>
            <person name="Leclerc J.E."/>
            <person name="Ravel J."/>
            <person name="Cebula T.A."/>
        </authorList>
    </citation>
    <scope>NUCLEOTIDE SEQUENCE [LARGE SCALE GENOMIC DNA]</scope>
    <source>
        <strain>SL254</strain>
    </source>
</reference>
<feature type="chain" id="PRO_1000136631" description="Phosphoglycerol transferase I">
    <location>
        <begin position="1"/>
        <end position="763"/>
    </location>
</feature>
<feature type="transmembrane region" description="Helical" evidence="1">
    <location>
        <begin position="1"/>
        <end position="21"/>
    </location>
</feature>
<feature type="transmembrane region" description="Helical" evidence="1">
    <location>
        <begin position="26"/>
        <end position="46"/>
    </location>
</feature>
<feature type="transmembrane region" description="Helical" evidence="1">
    <location>
        <begin position="77"/>
        <end position="97"/>
    </location>
</feature>
<feature type="transmembrane region" description="Helical" evidence="1">
    <location>
        <begin position="108"/>
        <end position="128"/>
    </location>
</feature>
<dbReference type="EC" id="2.7.8.20" evidence="1"/>
<dbReference type="EMBL" id="CP001113">
    <property type="protein sequence ID" value="ACF61283.1"/>
    <property type="molecule type" value="Genomic_DNA"/>
</dbReference>
<dbReference type="RefSeq" id="WP_001292707.1">
    <property type="nucleotide sequence ID" value="NZ_CCMR01000003.1"/>
</dbReference>
<dbReference type="SMR" id="B4T4E6"/>
<dbReference type="KEGG" id="see:SNSL254_A4896"/>
<dbReference type="HOGENOM" id="CLU_023986_1_0_6"/>
<dbReference type="UniPathway" id="UPA00637"/>
<dbReference type="Proteomes" id="UP000008824">
    <property type="component" value="Chromosome"/>
</dbReference>
<dbReference type="GO" id="GO:0005886">
    <property type="term" value="C:plasma membrane"/>
    <property type="evidence" value="ECO:0007669"/>
    <property type="project" value="UniProtKB-SubCell"/>
</dbReference>
<dbReference type="GO" id="GO:0008960">
    <property type="term" value="F:phosphatidylglycerol-membrane-oligosaccharide glycerophosphotransferase activity"/>
    <property type="evidence" value="ECO:0007669"/>
    <property type="project" value="UniProtKB-UniRule"/>
</dbReference>
<dbReference type="GO" id="GO:0009250">
    <property type="term" value="P:glucan biosynthetic process"/>
    <property type="evidence" value="ECO:0007669"/>
    <property type="project" value="UniProtKB-UniRule"/>
</dbReference>
<dbReference type="CDD" id="cd16015">
    <property type="entry name" value="LTA_synthase"/>
    <property type="match status" value="1"/>
</dbReference>
<dbReference type="FunFam" id="3.40.720.10:FF:000009">
    <property type="entry name" value="Phosphoglycerol transferase I"/>
    <property type="match status" value="1"/>
</dbReference>
<dbReference type="Gene3D" id="3.40.720.10">
    <property type="entry name" value="Alkaline Phosphatase, subunit A"/>
    <property type="match status" value="1"/>
</dbReference>
<dbReference type="HAMAP" id="MF_01070">
    <property type="entry name" value="MdoB_OpgB"/>
    <property type="match status" value="1"/>
</dbReference>
<dbReference type="InterPro" id="IPR017850">
    <property type="entry name" value="Alkaline_phosphatase_core_sf"/>
</dbReference>
<dbReference type="InterPro" id="IPR054288">
    <property type="entry name" value="DUF7024"/>
</dbReference>
<dbReference type="InterPro" id="IPR020881">
    <property type="entry name" value="OpgB"/>
</dbReference>
<dbReference type="InterPro" id="IPR050448">
    <property type="entry name" value="OpgB/LTA_synthase_biosynth"/>
</dbReference>
<dbReference type="InterPro" id="IPR000917">
    <property type="entry name" value="Sulfatase_N"/>
</dbReference>
<dbReference type="NCBIfam" id="NF003000">
    <property type="entry name" value="PRK03776.1"/>
    <property type="match status" value="1"/>
</dbReference>
<dbReference type="PANTHER" id="PTHR47371">
    <property type="entry name" value="LIPOTEICHOIC ACID SYNTHASE"/>
    <property type="match status" value="1"/>
</dbReference>
<dbReference type="PANTHER" id="PTHR47371:SF3">
    <property type="entry name" value="PHOSPHOGLYCEROL TRANSFERASE I"/>
    <property type="match status" value="1"/>
</dbReference>
<dbReference type="Pfam" id="PF22895">
    <property type="entry name" value="DUF7024"/>
    <property type="match status" value="1"/>
</dbReference>
<dbReference type="Pfam" id="PF00884">
    <property type="entry name" value="Sulfatase"/>
    <property type="match status" value="1"/>
</dbReference>
<dbReference type="SUPFAM" id="SSF53649">
    <property type="entry name" value="Alkaline phosphatase-like"/>
    <property type="match status" value="1"/>
</dbReference>
<proteinExistence type="inferred from homology"/>